<organism>
    <name type="scientific">Lanius ludovicianus</name>
    <name type="common">Loggerhead shrike</name>
    <dbReference type="NCBI Taxonomy" id="28713"/>
    <lineage>
        <taxon>Eukaryota</taxon>
        <taxon>Metazoa</taxon>
        <taxon>Chordata</taxon>
        <taxon>Craniata</taxon>
        <taxon>Vertebrata</taxon>
        <taxon>Euteleostomi</taxon>
        <taxon>Archelosauria</taxon>
        <taxon>Archosauria</taxon>
        <taxon>Dinosauria</taxon>
        <taxon>Saurischia</taxon>
        <taxon>Theropoda</taxon>
        <taxon>Coelurosauria</taxon>
        <taxon>Aves</taxon>
        <taxon>Neognathae</taxon>
        <taxon>Neoaves</taxon>
        <taxon>Telluraves</taxon>
        <taxon>Australaves</taxon>
        <taxon>Passeriformes</taxon>
        <taxon>Corvoidea</taxon>
        <taxon>Laniidae</taxon>
        <taxon>Lanius</taxon>
    </lineage>
</organism>
<proteinExistence type="inferred from homology"/>
<sequence>MALNLRKNHPIMKTINDALIDLPTPSNISIWWNFGSLLGICLIMQITTGLLLAMHYTADTSLAFSSVAHICRDVQFGWLIRNLHANGASFFFICIYLHIGRGLYYGSYMNKETWNIGIILLLMLMATAFVGYVLPWGQMSFWGATVITNLFSAIPYIGQTLVEWAWGGFSVDNPTLTRFFALHFLLPFLIAGLTLVHLTFLHETGSNNPLGIPSDCDKIPFHPYYSIKDILGFALMLILLARLALFSPNMLGDPENFAPANPLATPPHIKPEWYFLFAYAILRSIPNKLGGVLALAASILVLFLIPLLHKSKQRSMTFRPLSQILFWALVANILILTWVGSQPVEHPFIIIGQLASFSYFLILLVLFPIASVLENKMLKL</sequence>
<accession>Q34902</accession>
<dbReference type="EMBL" id="X74259">
    <property type="protein sequence ID" value="CAA52318.1"/>
    <property type="molecule type" value="Genomic_DNA"/>
</dbReference>
<dbReference type="EMBL" id="U74584">
    <property type="protein sequence ID" value="AAB60808.1"/>
    <property type="molecule type" value="Genomic_DNA"/>
</dbReference>
<dbReference type="EMBL" id="U74582">
    <property type="protein sequence ID" value="AAB60806.1"/>
    <property type="molecule type" value="Genomic_DNA"/>
</dbReference>
<dbReference type="SMR" id="Q34902"/>
<dbReference type="GO" id="GO:0005743">
    <property type="term" value="C:mitochondrial inner membrane"/>
    <property type="evidence" value="ECO:0007669"/>
    <property type="project" value="UniProtKB-SubCell"/>
</dbReference>
<dbReference type="GO" id="GO:0045275">
    <property type="term" value="C:respiratory chain complex III"/>
    <property type="evidence" value="ECO:0007669"/>
    <property type="project" value="InterPro"/>
</dbReference>
<dbReference type="GO" id="GO:0046872">
    <property type="term" value="F:metal ion binding"/>
    <property type="evidence" value="ECO:0007669"/>
    <property type="project" value="UniProtKB-KW"/>
</dbReference>
<dbReference type="GO" id="GO:0008121">
    <property type="term" value="F:ubiquinol-cytochrome-c reductase activity"/>
    <property type="evidence" value="ECO:0007669"/>
    <property type="project" value="InterPro"/>
</dbReference>
<dbReference type="GO" id="GO:0006122">
    <property type="term" value="P:mitochondrial electron transport, ubiquinol to cytochrome c"/>
    <property type="evidence" value="ECO:0007669"/>
    <property type="project" value="TreeGrafter"/>
</dbReference>
<dbReference type="CDD" id="cd00290">
    <property type="entry name" value="cytochrome_b_C"/>
    <property type="match status" value="1"/>
</dbReference>
<dbReference type="CDD" id="cd00284">
    <property type="entry name" value="Cytochrome_b_N"/>
    <property type="match status" value="1"/>
</dbReference>
<dbReference type="FunFam" id="1.20.810.10:FF:000002">
    <property type="entry name" value="Cytochrome b"/>
    <property type="match status" value="1"/>
</dbReference>
<dbReference type="Gene3D" id="1.20.810.10">
    <property type="entry name" value="Cytochrome Bc1 Complex, Chain C"/>
    <property type="match status" value="1"/>
</dbReference>
<dbReference type="InterPro" id="IPR005798">
    <property type="entry name" value="Cyt_b/b6_C"/>
</dbReference>
<dbReference type="InterPro" id="IPR036150">
    <property type="entry name" value="Cyt_b/b6_C_sf"/>
</dbReference>
<dbReference type="InterPro" id="IPR005797">
    <property type="entry name" value="Cyt_b/b6_N"/>
</dbReference>
<dbReference type="InterPro" id="IPR027387">
    <property type="entry name" value="Cytb/b6-like_sf"/>
</dbReference>
<dbReference type="InterPro" id="IPR030689">
    <property type="entry name" value="Cytochrome_b"/>
</dbReference>
<dbReference type="InterPro" id="IPR048260">
    <property type="entry name" value="Cytochrome_b_C_euk/bac"/>
</dbReference>
<dbReference type="InterPro" id="IPR048259">
    <property type="entry name" value="Cytochrome_b_N_euk/bac"/>
</dbReference>
<dbReference type="InterPro" id="IPR016174">
    <property type="entry name" value="Di-haem_cyt_TM"/>
</dbReference>
<dbReference type="PANTHER" id="PTHR19271">
    <property type="entry name" value="CYTOCHROME B"/>
    <property type="match status" value="1"/>
</dbReference>
<dbReference type="PANTHER" id="PTHR19271:SF16">
    <property type="entry name" value="CYTOCHROME B"/>
    <property type="match status" value="1"/>
</dbReference>
<dbReference type="Pfam" id="PF00032">
    <property type="entry name" value="Cytochrom_B_C"/>
    <property type="match status" value="1"/>
</dbReference>
<dbReference type="Pfam" id="PF00033">
    <property type="entry name" value="Cytochrome_B"/>
    <property type="match status" value="1"/>
</dbReference>
<dbReference type="PIRSF" id="PIRSF038885">
    <property type="entry name" value="COB"/>
    <property type="match status" value="1"/>
</dbReference>
<dbReference type="SUPFAM" id="SSF81648">
    <property type="entry name" value="a domain/subunit of cytochrome bc1 complex (Ubiquinol-cytochrome c reductase)"/>
    <property type="match status" value="1"/>
</dbReference>
<dbReference type="SUPFAM" id="SSF81342">
    <property type="entry name" value="Transmembrane di-heme cytochromes"/>
    <property type="match status" value="1"/>
</dbReference>
<dbReference type="PROSITE" id="PS51003">
    <property type="entry name" value="CYTB_CTER"/>
    <property type="match status" value="1"/>
</dbReference>
<dbReference type="PROSITE" id="PS51002">
    <property type="entry name" value="CYTB_NTER"/>
    <property type="match status" value="1"/>
</dbReference>
<gene>
    <name type="primary">MT-CYB</name>
    <name type="synonym">COB</name>
    <name type="synonym">CYTB</name>
    <name type="synonym">MTCYB</name>
</gene>
<evidence type="ECO:0000250" key="1"/>
<evidence type="ECO:0000250" key="2">
    <source>
        <dbReference type="UniProtKB" id="P00157"/>
    </source>
</evidence>
<evidence type="ECO:0000255" key="3">
    <source>
        <dbReference type="PROSITE-ProRule" id="PRU00967"/>
    </source>
</evidence>
<evidence type="ECO:0000255" key="4">
    <source>
        <dbReference type="PROSITE-ProRule" id="PRU00968"/>
    </source>
</evidence>
<keyword id="KW-0249">Electron transport</keyword>
<keyword id="KW-0349">Heme</keyword>
<keyword id="KW-0408">Iron</keyword>
<keyword id="KW-0472">Membrane</keyword>
<keyword id="KW-0479">Metal-binding</keyword>
<keyword id="KW-0496">Mitochondrion</keyword>
<keyword id="KW-0999">Mitochondrion inner membrane</keyword>
<keyword id="KW-0679">Respiratory chain</keyword>
<keyword id="KW-0812">Transmembrane</keyword>
<keyword id="KW-1133">Transmembrane helix</keyword>
<keyword id="KW-0813">Transport</keyword>
<keyword id="KW-0830">Ubiquinone</keyword>
<comment type="function">
    <text evidence="2">Component of the ubiquinol-cytochrome c reductase complex (complex III or cytochrome b-c1 complex) that is part of the mitochondrial respiratory chain. The b-c1 complex mediates electron transfer from ubiquinol to cytochrome c. Contributes to the generation of a proton gradient across the mitochondrial membrane that is then used for ATP synthesis.</text>
</comment>
<comment type="cofactor">
    <cofactor evidence="2">
        <name>heme b</name>
        <dbReference type="ChEBI" id="CHEBI:60344"/>
    </cofactor>
    <text evidence="2">Binds 2 heme b groups non-covalently.</text>
</comment>
<comment type="subunit">
    <text evidence="2">The cytochrome bc1 complex contains 11 subunits: 3 respiratory subunits (MT-CYB, CYC1 and UQCRFS1), 2 core proteins (UQCRC1 and UQCRC2) and 6 low-molecular weight proteins (UQCRH/QCR6, UQCRB/QCR7, UQCRQ/QCR8, UQCR10/QCR9, UQCR11/QCR10 and a cleavage product of UQCRFS1). This cytochrome bc1 complex then forms a dimer.</text>
</comment>
<comment type="subcellular location">
    <subcellularLocation>
        <location evidence="2">Mitochondrion inner membrane</location>
        <topology evidence="2">Multi-pass membrane protein</topology>
    </subcellularLocation>
</comment>
<comment type="miscellaneous">
    <text evidence="1">Heme 1 (or BL or b562) is low-potential and absorbs at about 562 nm, and heme 2 (or BH or b566) is high-potential and absorbs at about 566 nm.</text>
</comment>
<comment type="similarity">
    <text evidence="3 4">Belongs to the cytochrome b family.</text>
</comment>
<comment type="caution">
    <text evidence="2">The full-length protein contains only eight transmembrane helices, not nine as predicted by bioinformatics tools.</text>
</comment>
<name>CYB_LANLU</name>
<reference key="1">
    <citation type="journal article" date="1993" name="Mol. Biol. Evol.">
        <title>Recovering phylogenetic signal from DNA sequences: relationships within the corvine assemblage (class aves) as inferred from complete sequences of the mitochondrial DNA cytochrome-b gene.</title>
        <authorList>
            <person name="Helm-Bychowski K."/>
            <person name="Cracraft J."/>
        </authorList>
    </citation>
    <scope>NUCLEOTIDE SEQUENCE [GENOMIC DNA]</scope>
</reference>
<reference key="2">
    <citation type="journal article" date="1997" name="Mol. Ecol.">
        <title>Genetic differences between the endangered San Clemente Island loggerhead shrike Lanius ludovicianus mearnsi and two neighbouring subspecies demonstrated by mtDNA control region and cytochrome b sequence variation.</title>
        <authorList>
            <person name="Mundy N.I."/>
            <person name="Winchell C.S."/>
            <person name="Woodruff D.S."/>
        </authorList>
    </citation>
    <scope>NUCLEOTIDE SEQUENCE [GENOMIC DNA] OF 42-107</scope>
</reference>
<feature type="chain" id="PRO_0000061090" description="Cytochrome b">
    <location>
        <begin position="1"/>
        <end position="380"/>
    </location>
</feature>
<feature type="transmembrane region" description="Helical" evidence="2">
    <location>
        <begin position="34"/>
        <end position="54"/>
    </location>
</feature>
<feature type="transmembrane region" description="Helical" evidence="2">
    <location>
        <begin position="78"/>
        <end position="99"/>
    </location>
</feature>
<feature type="transmembrane region" description="Helical" evidence="2">
    <location>
        <begin position="114"/>
        <end position="134"/>
    </location>
</feature>
<feature type="transmembrane region" description="Helical" evidence="2">
    <location>
        <begin position="179"/>
        <end position="199"/>
    </location>
</feature>
<feature type="transmembrane region" description="Helical" evidence="2">
    <location>
        <begin position="227"/>
        <end position="247"/>
    </location>
</feature>
<feature type="transmembrane region" description="Helical" evidence="2">
    <location>
        <begin position="289"/>
        <end position="309"/>
    </location>
</feature>
<feature type="transmembrane region" description="Helical" evidence="2">
    <location>
        <begin position="321"/>
        <end position="341"/>
    </location>
</feature>
<feature type="transmembrane region" description="Helical" evidence="2">
    <location>
        <begin position="348"/>
        <end position="368"/>
    </location>
</feature>
<feature type="binding site" description="axial binding residue" evidence="2">
    <location>
        <position position="84"/>
    </location>
    <ligand>
        <name>heme b</name>
        <dbReference type="ChEBI" id="CHEBI:60344"/>
        <label>b562</label>
    </ligand>
    <ligandPart>
        <name>Fe</name>
        <dbReference type="ChEBI" id="CHEBI:18248"/>
    </ligandPart>
</feature>
<feature type="binding site" description="axial binding residue" evidence="2">
    <location>
        <position position="98"/>
    </location>
    <ligand>
        <name>heme b</name>
        <dbReference type="ChEBI" id="CHEBI:60344"/>
        <label>b566</label>
    </ligand>
    <ligandPart>
        <name>Fe</name>
        <dbReference type="ChEBI" id="CHEBI:18248"/>
    </ligandPart>
</feature>
<feature type="binding site" description="axial binding residue" evidence="2">
    <location>
        <position position="183"/>
    </location>
    <ligand>
        <name>heme b</name>
        <dbReference type="ChEBI" id="CHEBI:60344"/>
        <label>b562</label>
    </ligand>
    <ligandPart>
        <name>Fe</name>
        <dbReference type="ChEBI" id="CHEBI:18248"/>
    </ligandPart>
</feature>
<feature type="binding site" description="axial binding residue" evidence="2">
    <location>
        <position position="197"/>
    </location>
    <ligand>
        <name>heme b</name>
        <dbReference type="ChEBI" id="CHEBI:60344"/>
        <label>b566</label>
    </ligand>
    <ligandPart>
        <name>Fe</name>
        <dbReference type="ChEBI" id="CHEBI:18248"/>
    </ligandPart>
</feature>
<feature type="binding site" evidence="2">
    <location>
        <position position="202"/>
    </location>
    <ligand>
        <name>a ubiquinone</name>
        <dbReference type="ChEBI" id="CHEBI:16389"/>
    </ligand>
</feature>
<protein>
    <recommendedName>
        <fullName>Cytochrome b</fullName>
    </recommendedName>
    <alternativeName>
        <fullName>Complex III subunit 3</fullName>
    </alternativeName>
    <alternativeName>
        <fullName>Complex III subunit III</fullName>
    </alternativeName>
    <alternativeName>
        <fullName>Cytochrome b-c1 complex subunit 3</fullName>
    </alternativeName>
    <alternativeName>
        <fullName>Ubiquinol-cytochrome-c reductase complex cytochrome b subunit</fullName>
    </alternativeName>
</protein>
<geneLocation type="mitochondrion"/>